<gene>
    <name type="primary">srf</name>
</gene>
<keyword id="KW-0010">Activator</keyword>
<keyword id="KW-0217">Developmental protein</keyword>
<keyword id="KW-0238">DNA-binding</keyword>
<keyword id="KW-0539">Nucleus</keyword>
<keyword id="KW-1185">Reference proteome</keyword>
<keyword id="KW-0804">Transcription</keyword>
<keyword id="KW-0805">Transcription regulation</keyword>
<feature type="chain" id="PRO_0000199425" description="Serum response factor">
    <location>
        <begin position="1"/>
        <end position="448"/>
    </location>
</feature>
<feature type="domain" description="MADS-box" evidence="2">
    <location>
        <begin position="98"/>
        <end position="152"/>
    </location>
</feature>
<feature type="region of interest" description="Disordered" evidence="3">
    <location>
        <begin position="1"/>
        <end position="61"/>
    </location>
</feature>
<feature type="region of interest" description="Disordered" evidence="3">
    <location>
        <begin position="173"/>
        <end position="223"/>
    </location>
</feature>
<feature type="compositionally biased region" description="Gly residues" evidence="3">
    <location>
        <begin position="24"/>
        <end position="38"/>
    </location>
</feature>
<feature type="compositionally biased region" description="Polar residues" evidence="3">
    <location>
        <begin position="201"/>
        <end position="211"/>
    </location>
</feature>
<dbReference type="EMBL" id="X56451">
    <property type="protein sequence ID" value="CAA39832.1"/>
    <property type="molecule type" value="mRNA"/>
</dbReference>
<dbReference type="PIR" id="S15018">
    <property type="entry name" value="S15018"/>
</dbReference>
<dbReference type="RefSeq" id="NP_001095218.1">
    <property type="nucleotide sequence ID" value="NM_001101748.1"/>
</dbReference>
<dbReference type="SMR" id="P23790"/>
<dbReference type="BioGRID" id="98879">
    <property type="interactions" value="1"/>
</dbReference>
<dbReference type="GeneID" id="394277"/>
<dbReference type="KEGG" id="xla:394277"/>
<dbReference type="AGR" id="Xenbase:XB-GENE-864819"/>
<dbReference type="CTD" id="394277"/>
<dbReference type="Xenbase" id="XB-GENE-864819">
    <property type="gene designation" value="srf.L"/>
</dbReference>
<dbReference type="OrthoDB" id="2284405at2759"/>
<dbReference type="Proteomes" id="UP000186698">
    <property type="component" value="Chromosome 5L"/>
</dbReference>
<dbReference type="Bgee" id="394277">
    <property type="expression patterns" value="Expressed in neurula embryo and 19 other cell types or tissues"/>
</dbReference>
<dbReference type="GO" id="GO:0005634">
    <property type="term" value="C:nucleus"/>
    <property type="evidence" value="ECO:0007669"/>
    <property type="project" value="UniProtKB-SubCell"/>
</dbReference>
<dbReference type="GO" id="GO:0003700">
    <property type="term" value="F:DNA-binding transcription factor activity"/>
    <property type="evidence" value="ECO:0000250"/>
    <property type="project" value="UniProtKB"/>
</dbReference>
<dbReference type="GO" id="GO:0000981">
    <property type="term" value="F:DNA-binding transcription factor activity, RNA polymerase II-specific"/>
    <property type="evidence" value="ECO:0007669"/>
    <property type="project" value="InterPro"/>
</dbReference>
<dbReference type="GO" id="GO:0046983">
    <property type="term" value="F:protein dimerization activity"/>
    <property type="evidence" value="ECO:0007669"/>
    <property type="project" value="InterPro"/>
</dbReference>
<dbReference type="GO" id="GO:0010736">
    <property type="term" value="F:serum response element binding"/>
    <property type="evidence" value="ECO:0000250"/>
    <property type="project" value="UniProtKB"/>
</dbReference>
<dbReference type="GO" id="GO:0030036">
    <property type="term" value="P:actin cytoskeleton organization"/>
    <property type="evidence" value="ECO:0000250"/>
    <property type="project" value="UniProtKB"/>
</dbReference>
<dbReference type="GO" id="GO:0045944">
    <property type="term" value="P:positive regulation of transcription by RNA polymerase II"/>
    <property type="evidence" value="ECO:0000250"/>
    <property type="project" value="UniProtKB"/>
</dbReference>
<dbReference type="CDD" id="cd00266">
    <property type="entry name" value="MADS_SRF_like"/>
    <property type="match status" value="1"/>
</dbReference>
<dbReference type="FunFam" id="3.40.1810.10:FF:000002">
    <property type="entry name" value="Serum response factor b"/>
    <property type="match status" value="1"/>
</dbReference>
<dbReference type="Gene3D" id="3.40.1810.10">
    <property type="entry name" value="Transcription factor, MADS-box"/>
    <property type="match status" value="1"/>
</dbReference>
<dbReference type="InterPro" id="IPR050142">
    <property type="entry name" value="MADS-box/MEF2_TF"/>
</dbReference>
<dbReference type="InterPro" id="IPR033897">
    <property type="entry name" value="SRF-like_MADS-box"/>
</dbReference>
<dbReference type="InterPro" id="IPR002100">
    <property type="entry name" value="TF_MADSbox"/>
</dbReference>
<dbReference type="InterPro" id="IPR036879">
    <property type="entry name" value="TF_MADSbox_sf"/>
</dbReference>
<dbReference type="PANTHER" id="PTHR48019">
    <property type="entry name" value="SERUM RESPONSE FACTOR HOMOLOG"/>
    <property type="match status" value="1"/>
</dbReference>
<dbReference type="Pfam" id="PF00319">
    <property type="entry name" value="SRF-TF"/>
    <property type="match status" value="1"/>
</dbReference>
<dbReference type="PRINTS" id="PR00404">
    <property type="entry name" value="MADSDOMAIN"/>
</dbReference>
<dbReference type="SMART" id="SM00432">
    <property type="entry name" value="MADS"/>
    <property type="match status" value="1"/>
</dbReference>
<dbReference type="SUPFAM" id="SSF55455">
    <property type="entry name" value="SRF-like"/>
    <property type="match status" value="1"/>
</dbReference>
<dbReference type="PROSITE" id="PS00350">
    <property type="entry name" value="MADS_BOX_1"/>
    <property type="match status" value="1"/>
</dbReference>
<dbReference type="PROSITE" id="PS50066">
    <property type="entry name" value="MADS_BOX_2"/>
    <property type="match status" value="1"/>
</dbReference>
<protein>
    <recommendedName>
        <fullName>Serum response factor</fullName>
        <shortName>SRF</shortName>
    </recommendedName>
</protein>
<name>SRF_XENLA</name>
<proteinExistence type="evidence at transcript level"/>
<sequence>MLPSNQAGVAGSGRGLGLARRAGNGAGCPGIRGPGGQYSGSSGSSESGEEEDPPGRGIKRGLNELELPEQGGAAGVVGYPGASGTVSGAKPGKKTRGRVKIKMEFIDNKLRRYTTFSKRKTGIMKKAYELSTLTGTQVLLLVASETGHVYTFATRKLQPMITSETGKALIQTCLNSPDSPPRSDPSTDQRMSATGFEETDLTYQVSESDSSGETKDSLKPAFTVTNLPGTSNIQTVPTTSTSMQVSSGHSFPITNYLAPVTSANGTVLKTEGGAMSSGGLMQIPAGFTLMSAGGAVAQQVPVQAIQVHSAAQASPSSDSSSELVQTSSSGTVTLPAAIMTSSVPTTVSGHMMYPSPHAVMYAPTQGLTDGGLAVLNAFSSAPQMQVSHTQEQGGVQQVFLTAPPGTVQIPVSAVQLHQMTVIGQQSSGSNLTELQVVNLDTSNSNKND</sequence>
<reference key="1">
    <citation type="journal article" date="1991" name="EMBO J.">
        <title>Expression of genes encoding the transcription factor SRF during early development of Xenopus laevis: identification of a CArG box-binding activity as SRF.</title>
        <authorList>
            <person name="Mohun T.J."/>
            <person name="Chambers A.E."/>
            <person name="Towers N."/>
            <person name="Taylor M.V."/>
        </authorList>
    </citation>
    <scope>NUCLEOTIDE SEQUENCE [MRNA]</scope>
</reference>
<accession>P23790</accession>
<evidence type="ECO:0000250" key="1">
    <source>
        <dbReference type="UniProtKB" id="Q9JM73"/>
    </source>
</evidence>
<evidence type="ECO:0000255" key="2">
    <source>
        <dbReference type="PROSITE-ProRule" id="PRU00251"/>
    </source>
</evidence>
<evidence type="ECO:0000256" key="3">
    <source>
        <dbReference type="SAM" id="MobiDB-lite"/>
    </source>
</evidence>
<comment type="function">
    <text evidence="1">SRF is a transcription factor that binds to the serum response element (SRE), a short sequence of dyad symmetry located 300 bp to the 5' of the site of transcription initiation of some genes (such as FOS). Together with MRTFA transcription coactivator, controls expression of genes regulating the cytoskeleton during development, morphogenesis and cell migration.</text>
</comment>
<comment type="subunit">
    <text evidence="1">Binds DNA as a multimer, probably a dimer.</text>
</comment>
<comment type="subcellular location">
    <subcellularLocation>
        <location evidence="1 2">Nucleus</location>
    </subcellularLocation>
</comment>
<organism>
    <name type="scientific">Xenopus laevis</name>
    <name type="common">African clawed frog</name>
    <dbReference type="NCBI Taxonomy" id="8355"/>
    <lineage>
        <taxon>Eukaryota</taxon>
        <taxon>Metazoa</taxon>
        <taxon>Chordata</taxon>
        <taxon>Craniata</taxon>
        <taxon>Vertebrata</taxon>
        <taxon>Euteleostomi</taxon>
        <taxon>Amphibia</taxon>
        <taxon>Batrachia</taxon>
        <taxon>Anura</taxon>
        <taxon>Pipoidea</taxon>
        <taxon>Pipidae</taxon>
        <taxon>Xenopodinae</taxon>
        <taxon>Xenopus</taxon>
        <taxon>Xenopus</taxon>
    </lineage>
</organism>